<accession>Q6CT73</accession>
<sequence length="318" mass="38071">MDEDEKKDMCPICKTDRYLSPDMKFLINPECYHKICESCVDRIFSLGPAQCPYEGCDKILRRNKFKTQIFDDVGVEKEVDIRKRVFNVFNKTLEDFDNNQDDYDKYLEEVEDIIYNLDHGIDMEKTEERLRTYEELNKQLIMANLERSKQDVANFEQRQKFEKEMKLKKRLLEKQIEEEERANREWAKREIVNQLTVNEDAEEVIENVKKTVKLKKSSARRKLEELNKVLRNNPYMTMTNGRMKKKDTVPFTPFNGDRDLHKRYELVENEYNDSFIRDLQKKKEYIASGFRADFIYDRMLTEAFMGLGCIISEELQSS</sequence>
<comment type="function">
    <text evidence="1">Acts as a component of the general transcription and DNA repair factor IIH (TFIIH or factor B), which is essential for both basal and activated transcription, and is involved in nucleotide excision repair (NER) of damaged DNA. TFIIH as CTD kinase activity and DNA-dependent ATPase activity, and is essential for polymerase II transcription (By similarity).</text>
</comment>
<comment type="subcellular location">
    <subcellularLocation>
        <location evidence="1">Nucleus</location>
    </subcellularLocation>
</comment>
<dbReference type="EMBL" id="CR382123">
    <property type="protein sequence ID" value="CAH01717.1"/>
    <property type="molecule type" value="Genomic_DNA"/>
</dbReference>
<dbReference type="RefSeq" id="XP_452866.1">
    <property type="nucleotide sequence ID" value="XM_452866.1"/>
</dbReference>
<dbReference type="SMR" id="Q6CT73"/>
<dbReference type="FunCoup" id="Q6CT73">
    <property type="interactions" value="570"/>
</dbReference>
<dbReference type="STRING" id="284590.Q6CT73"/>
<dbReference type="PaxDb" id="284590-Q6CT73"/>
<dbReference type="KEGG" id="kla:KLLA0_C14872g"/>
<dbReference type="eggNOG" id="KOG3800">
    <property type="taxonomic scope" value="Eukaryota"/>
</dbReference>
<dbReference type="HOGENOM" id="CLU_048466_1_1_1"/>
<dbReference type="InParanoid" id="Q6CT73"/>
<dbReference type="OMA" id="PNKRDYY"/>
<dbReference type="Proteomes" id="UP000000598">
    <property type="component" value="Chromosome C"/>
</dbReference>
<dbReference type="GO" id="GO:0005675">
    <property type="term" value="C:transcription factor TFIIH holo complex"/>
    <property type="evidence" value="ECO:0007669"/>
    <property type="project" value="InterPro"/>
</dbReference>
<dbReference type="GO" id="GO:0061575">
    <property type="term" value="F:cyclin-dependent protein serine/threonine kinase activator activity"/>
    <property type="evidence" value="ECO:0007669"/>
    <property type="project" value="InterPro"/>
</dbReference>
<dbReference type="GO" id="GO:0008270">
    <property type="term" value="F:zinc ion binding"/>
    <property type="evidence" value="ECO:0007669"/>
    <property type="project" value="UniProtKB-KW"/>
</dbReference>
<dbReference type="GO" id="GO:0006289">
    <property type="term" value="P:nucleotide-excision repair"/>
    <property type="evidence" value="ECO:0007669"/>
    <property type="project" value="InterPro"/>
</dbReference>
<dbReference type="GO" id="GO:0006357">
    <property type="term" value="P:regulation of transcription by RNA polymerase II"/>
    <property type="evidence" value="ECO:0007669"/>
    <property type="project" value="TreeGrafter"/>
</dbReference>
<dbReference type="CDD" id="cd16573">
    <property type="entry name" value="RING-HC_TFB3-like"/>
    <property type="match status" value="1"/>
</dbReference>
<dbReference type="FunFam" id="3.30.40.10:FF:000037">
    <property type="entry name" value="Cdk-activating kinase assembly factor MAT1, centre"/>
    <property type="match status" value="1"/>
</dbReference>
<dbReference type="Gene3D" id="3.30.40.10">
    <property type="entry name" value="Zinc/RING finger domain, C3HC4 (zinc finger)"/>
    <property type="match status" value="1"/>
</dbReference>
<dbReference type="InterPro" id="IPR015877">
    <property type="entry name" value="Cdk-activating_kinase_MAT1_cen"/>
</dbReference>
<dbReference type="InterPro" id="IPR004575">
    <property type="entry name" value="MAT1/Tfb3"/>
</dbReference>
<dbReference type="InterPro" id="IPR001841">
    <property type="entry name" value="Znf_RING"/>
</dbReference>
<dbReference type="InterPro" id="IPR013083">
    <property type="entry name" value="Znf_RING/FYVE/PHD"/>
</dbReference>
<dbReference type="InterPro" id="IPR017907">
    <property type="entry name" value="Znf_RING_CS"/>
</dbReference>
<dbReference type="NCBIfam" id="TIGR00570">
    <property type="entry name" value="cdk7"/>
    <property type="match status" value="1"/>
</dbReference>
<dbReference type="PANTHER" id="PTHR12683">
    <property type="entry name" value="CDK-ACTIVATING KINASE ASSEMBLY FACTOR MAT1"/>
    <property type="match status" value="1"/>
</dbReference>
<dbReference type="PANTHER" id="PTHR12683:SF13">
    <property type="entry name" value="CDK-ACTIVATING KINASE ASSEMBLY FACTOR MAT1"/>
    <property type="match status" value="1"/>
</dbReference>
<dbReference type="Pfam" id="PF06391">
    <property type="entry name" value="MAT1"/>
    <property type="match status" value="1"/>
</dbReference>
<dbReference type="Pfam" id="PF17121">
    <property type="entry name" value="zf-C3HC4_5"/>
    <property type="match status" value="1"/>
</dbReference>
<dbReference type="PIRSF" id="PIRSF003338">
    <property type="entry name" value="MAT1_metazoa"/>
    <property type="match status" value="1"/>
</dbReference>
<dbReference type="SUPFAM" id="SSF57850">
    <property type="entry name" value="RING/U-box"/>
    <property type="match status" value="1"/>
</dbReference>
<dbReference type="PROSITE" id="PS00518">
    <property type="entry name" value="ZF_RING_1"/>
    <property type="match status" value="1"/>
</dbReference>
<dbReference type="PROSITE" id="PS50089">
    <property type="entry name" value="ZF_RING_2"/>
    <property type="match status" value="1"/>
</dbReference>
<name>TFB3_KLULA</name>
<organism>
    <name type="scientific">Kluyveromyces lactis (strain ATCC 8585 / CBS 2359 / DSM 70799 / NBRC 1267 / NRRL Y-1140 / WM37)</name>
    <name type="common">Yeast</name>
    <name type="synonym">Candida sphaerica</name>
    <dbReference type="NCBI Taxonomy" id="284590"/>
    <lineage>
        <taxon>Eukaryota</taxon>
        <taxon>Fungi</taxon>
        <taxon>Dikarya</taxon>
        <taxon>Ascomycota</taxon>
        <taxon>Saccharomycotina</taxon>
        <taxon>Saccharomycetes</taxon>
        <taxon>Saccharomycetales</taxon>
        <taxon>Saccharomycetaceae</taxon>
        <taxon>Kluyveromyces</taxon>
    </lineage>
</organism>
<protein>
    <recommendedName>
        <fullName>RNA polymerase II transcription factor B subunit 3</fullName>
    </recommendedName>
    <alternativeName>
        <fullName>RNA polymerase II transcription factor B 38 kDa subunit</fullName>
    </alternativeName>
    <alternativeName>
        <fullName>RNA polymerase II transcription factor B p38 subunit</fullName>
    </alternativeName>
</protein>
<proteinExistence type="inferred from homology"/>
<gene>
    <name type="primary">TFB3</name>
    <name type="ordered locus">KLLA0C14872g</name>
</gene>
<evidence type="ECO:0000250" key="1"/>
<evidence type="ECO:0000255" key="2">
    <source>
        <dbReference type="PROSITE-ProRule" id="PRU00175"/>
    </source>
</evidence>
<keyword id="KW-0479">Metal-binding</keyword>
<keyword id="KW-0539">Nucleus</keyword>
<keyword id="KW-1185">Reference proteome</keyword>
<keyword id="KW-0804">Transcription</keyword>
<keyword id="KW-0805">Transcription regulation</keyword>
<keyword id="KW-0862">Zinc</keyword>
<keyword id="KW-0863">Zinc-finger</keyword>
<reference key="1">
    <citation type="journal article" date="2004" name="Nature">
        <title>Genome evolution in yeasts.</title>
        <authorList>
            <person name="Dujon B."/>
            <person name="Sherman D."/>
            <person name="Fischer G."/>
            <person name="Durrens P."/>
            <person name="Casaregola S."/>
            <person name="Lafontaine I."/>
            <person name="de Montigny J."/>
            <person name="Marck C."/>
            <person name="Neuveglise C."/>
            <person name="Talla E."/>
            <person name="Goffard N."/>
            <person name="Frangeul L."/>
            <person name="Aigle M."/>
            <person name="Anthouard V."/>
            <person name="Babour A."/>
            <person name="Barbe V."/>
            <person name="Barnay S."/>
            <person name="Blanchin S."/>
            <person name="Beckerich J.-M."/>
            <person name="Beyne E."/>
            <person name="Bleykasten C."/>
            <person name="Boisrame A."/>
            <person name="Boyer J."/>
            <person name="Cattolico L."/>
            <person name="Confanioleri F."/>
            <person name="de Daruvar A."/>
            <person name="Despons L."/>
            <person name="Fabre E."/>
            <person name="Fairhead C."/>
            <person name="Ferry-Dumazet H."/>
            <person name="Groppi A."/>
            <person name="Hantraye F."/>
            <person name="Hennequin C."/>
            <person name="Jauniaux N."/>
            <person name="Joyet P."/>
            <person name="Kachouri R."/>
            <person name="Kerrest A."/>
            <person name="Koszul R."/>
            <person name="Lemaire M."/>
            <person name="Lesur I."/>
            <person name="Ma L."/>
            <person name="Muller H."/>
            <person name="Nicaud J.-M."/>
            <person name="Nikolski M."/>
            <person name="Oztas S."/>
            <person name="Ozier-Kalogeropoulos O."/>
            <person name="Pellenz S."/>
            <person name="Potier S."/>
            <person name="Richard G.-F."/>
            <person name="Straub M.-L."/>
            <person name="Suleau A."/>
            <person name="Swennen D."/>
            <person name="Tekaia F."/>
            <person name="Wesolowski-Louvel M."/>
            <person name="Westhof E."/>
            <person name="Wirth B."/>
            <person name="Zeniou-Meyer M."/>
            <person name="Zivanovic Y."/>
            <person name="Bolotin-Fukuhara M."/>
            <person name="Thierry A."/>
            <person name="Bouchier C."/>
            <person name="Caudron B."/>
            <person name="Scarpelli C."/>
            <person name="Gaillardin C."/>
            <person name="Weissenbach J."/>
            <person name="Wincker P."/>
            <person name="Souciet J.-L."/>
        </authorList>
    </citation>
    <scope>NUCLEOTIDE SEQUENCE [LARGE SCALE GENOMIC DNA]</scope>
    <source>
        <strain>ATCC 8585 / CBS 2359 / DSM 70799 / NBRC 1267 / NRRL Y-1140 / WM37</strain>
    </source>
</reference>
<feature type="chain" id="PRO_0000055939" description="RNA polymerase II transcription factor B subunit 3">
    <location>
        <begin position="1"/>
        <end position="318"/>
    </location>
</feature>
<feature type="zinc finger region" description="RING-type" evidence="2">
    <location>
        <begin position="10"/>
        <end position="55"/>
    </location>
</feature>